<comment type="catalytic activity">
    <reaction>
        <text>a 2'-deoxyribonucleoside 5'-triphosphate + [thioredoxin]-disulfide + H2O = a ribonucleoside 5'-triphosphate + [thioredoxin]-dithiol</text>
        <dbReference type="Rhea" id="RHEA:12701"/>
        <dbReference type="Rhea" id="RHEA-COMP:10698"/>
        <dbReference type="Rhea" id="RHEA-COMP:10700"/>
        <dbReference type="ChEBI" id="CHEBI:15377"/>
        <dbReference type="ChEBI" id="CHEBI:29950"/>
        <dbReference type="ChEBI" id="CHEBI:50058"/>
        <dbReference type="ChEBI" id="CHEBI:61557"/>
        <dbReference type="ChEBI" id="CHEBI:61560"/>
        <dbReference type="EC" id="1.17.4.2"/>
    </reaction>
</comment>
<comment type="cofactor">
    <cofactor evidence="1">
        <name>adenosylcob(III)alamin</name>
        <dbReference type="ChEBI" id="CHEBI:18408"/>
    </cofactor>
</comment>
<comment type="activity regulation">
    <text evidence="1">Allosterically regulated by ATP and dNTP.</text>
</comment>
<comment type="subunit">
    <text evidence="1">Monomer.</text>
</comment>
<comment type="similarity">
    <text evidence="2">Belongs to the class II ribonucleoside-triphosphate reductase family.</text>
</comment>
<protein>
    <recommendedName>
        <fullName>Adenosylcobalamin-dependent ribonucleoside-triphosphate reductase</fullName>
        <shortName>RTPR</shortName>
        <ecNumber>1.17.4.2</ecNumber>
    </recommendedName>
</protein>
<accession>Q5FMX8</accession>
<proteinExistence type="inferred from homology"/>
<name>RTPR_LACAC</name>
<feature type="chain" id="PRO_0000326536" description="Adenosylcobalamin-dependent ribonucleoside-triphosphate reductase">
    <location>
        <begin position="1"/>
        <end position="744"/>
    </location>
</feature>
<feature type="region of interest" description="Effector region-1" evidence="1">
    <location>
        <begin position="148"/>
        <end position="159"/>
    </location>
</feature>
<feature type="region of interest" description="Effector region-2" evidence="1">
    <location>
        <begin position="169"/>
        <end position="318"/>
    </location>
</feature>
<feature type="region of interest" description="Adenosylcobalamin-binding-1" evidence="1">
    <location>
        <begin position="570"/>
        <end position="631"/>
    </location>
</feature>
<feature type="region of interest" description="Adenosylcobalamin-binding-2" evidence="1">
    <location>
        <begin position="690"/>
        <end position="729"/>
    </location>
</feature>
<feature type="active site" evidence="1">
    <location>
        <position position="413"/>
    </location>
</feature>
<feature type="active site" evidence="1">
    <location>
        <position position="415"/>
    </location>
</feature>
<feature type="disulfide bond" description="Redox-active" evidence="1">
    <location>
        <begin position="120"/>
        <end position="424"/>
    </location>
</feature>
<dbReference type="EC" id="1.17.4.2"/>
<dbReference type="EMBL" id="CP000033">
    <property type="protein sequence ID" value="AAV41946.1"/>
    <property type="molecule type" value="Genomic_DNA"/>
</dbReference>
<dbReference type="RefSeq" id="YP_192977.1">
    <property type="nucleotide sequence ID" value="NC_006814.3"/>
</dbReference>
<dbReference type="SMR" id="Q5FMX8"/>
<dbReference type="STRING" id="272621.LBA0041"/>
<dbReference type="KEGG" id="lac:LBA0041"/>
<dbReference type="PATRIC" id="fig|272621.13.peg.39"/>
<dbReference type="eggNOG" id="COG0209">
    <property type="taxonomic scope" value="Bacteria"/>
</dbReference>
<dbReference type="HOGENOM" id="CLU_002384_0_0_9"/>
<dbReference type="OrthoDB" id="9763270at2"/>
<dbReference type="BioCyc" id="LACI272621:G1G49-39-MONOMER"/>
<dbReference type="Proteomes" id="UP000006381">
    <property type="component" value="Chromosome"/>
</dbReference>
<dbReference type="GO" id="GO:0031419">
    <property type="term" value="F:cobalamin binding"/>
    <property type="evidence" value="ECO:0007669"/>
    <property type="project" value="UniProtKB-KW"/>
</dbReference>
<dbReference type="GO" id="GO:0000166">
    <property type="term" value="F:nucleotide binding"/>
    <property type="evidence" value="ECO:0007669"/>
    <property type="project" value="InterPro"/>
</dbReference>
<dbReference type="GO" id="GO:0004748">
    <property type="term" value="F:ribonucleoside-diphosphate reductase activity, thioredoxin disulfide as acceptor"/>
    <property type="evidence" value="ECO:0007669"/>
    <property type="project" value="InterPro"/>
</dbReference>
<dbReference type="GO" id="GO:0008998">
    <property type="term" value="F:ribonucleoside-triphosphate reductase (thioredoxin) activity"/>
    <property type="evidence" value="ECO:0007669"/>
    <property type="project" value="UniProtKB-EC"/>
</dbReference>
<dbReference type="GO" id="GO:0006260">
    <property type="term" value="P:DNA replication"/>
    <property type="evidence" value="ECO:0007669"/>
    <property type="project" value="UniProtKB-KW"/>
</dbReference>
<dbReference type="Gene3D" id="3.20.70.20">
    <property type="match status" value="1"/>
</dbReference>
<dbReference type="Gene3D" id="3.30.1620.10">
    <property type="entry name" value="b-12 dependent (class ii) ribonucleotide reductase, Chain A, Domain 2"/>
    <property type="match status" value="1"/>
</dbReference>
<dbReference type="Gene3D" id="3.90.1390.10">
    <property type="entry name" value="b-12 dependent (class ii) ribonucleotide reductase, chain A, domain 3"/>
    <property type="match status" value="1"/>
</dbReference>
<dbReference type="InterPro" id="IPR050862">
    <property type="entry name" value="RdRp_reductase_class-2"/>
</dbReference>
<dbReference type="InterPro" id="IPR054158">
    <property type="entry name" value="RNR-II_ins_dom"/>
</dbReference>
<dbReference type="InterPro" id="IPR040763">
    <property type="entry name" value="RNR_alpha_hel"/>
</dbReference>
<dbReference type="InterPro" id="IPR013345">
    <property type="entry name" value="RTP_Rdtase_AdoCbl-dep"/>
</dbReference>
<dbReference type="NCBIfam" id="TIGR02505">
    <property type="entry name" value="RTPR"/>
    <property type="match status" value="1"/>
</dbReference>
<dbReference type="PANTHER" id="PTHR43371:SF1">
    <property type="entry name" value="RIBONUCLEOSIDE-DIPHOSPHATE REDUCTASE"/>
    <property type="match status" value="1"/>
</dbReference>
<dbReference type="PANTHER" id="PTHR43371">
    <property type="entry name" value="VITAMIN B12-DEPENDENT RIBONUCLEOTIDE REDUCTASE"/>
    <property type="match status" value="1"/>
</dbReference>
<dbReference type="Pfam" id="PF21995">
    <property type="entry name" value="RNR-II_ins_dom"/>
    <property type="match status" value="1"/>
</dbReference>
<dbReference type="Pfam" id="PF17975">
    <property type="entry name" value="RNR_Alpha"/>
    <property type="match status" value="1"/>
</dbReference>
<dbReference type="SUPFAM" id="SSF51998">
    <property type="entry name" value="PFL-like glycyl radical enzymes"/>
    <property type="match status" value="1"/>
</dbReference>
<reference key="1">
    <citation type="journal article" date="2005" name="Proc. Natl. Acad. Sci. U.S.A.">
        <title>Complete genome sequence of the probiotic lactic acid bacterium Lactobacillus acidophilus NCFM.</title>
        <authorList>
            <person name="Altermann E."/>
            <person name="Russell W.M."/>
            <person name="Azcarate-Peril M.A."/>
            <person name="Barrangou R."/>
            <person name="Buck B.L."/>
            <person name="McAuliffe O."/>
            <person name="Souther N."/>
            <person name="Dobson A."/>
            <person name="Duong T."/>
            <person name="Callanan M."/>
            <person name="Lick S."/>
            <person name="Hamrick A."/>
            <person name="Cano R."/>
            <person name="Klaenhammer T.R."/>
        </authorList>
    </citation>
    <scope>NUCLEOTIDE SEQUENCE [LARGE SCALE GENOMIC DNA]</scope>
    <source>
        <strain>ATCC 700396 / NCK56 / N2 / NCFM</strain>
    </source>
</reference>
<evidence type="ECO:0000250" key="1"/>
<evidence type="ECO:0000305" key="2"/>
<sequence length="744" mass="83521">MSSTRIELDQDFIDQVKHEIKPHWGELGWVTYKRTYARWLPEKNRSENWDETVKRVIEGNVNLDPRLQGTPSEEVINELTNEAKQLFRLTYGLSATPSGRNLWISGTDYQKRTGDSLNNCWFIAIRPQEYGDSHIVPTYIDKREKAVSMPFSFLFDQLMKGGGVGFSVVNSNIKQIPKVDNKIDLTVVINKSSKSHDASIKVGAVDKDEWEKQNPDHDDIIYYRLPDTREGWVLANARLIDMHFNNTNPDQKTKLVLDISDIRPYGAKIHGFGGTASGPMPLVEMFIDINNVINARVGKNLTAVDATDICNLIGKTVVAGNVRRSAELALGSNDDQDFIKMKQDKEKLYHHRWASNNSVAINSKFNNYGPIADGILHNGEPGIVNLDLSRNYGRIVDGYQPGIDDDVEGTNPCGEISLANGEPCNLFEVFPYTAEKQGWNLKEAFTLATRFAKRVTFSHYDWEVSRKIIQKNRRIGVSMSGIQDWLLNDLGHRVVTGFEDAVDEQSGEKIKKPIYDPKGIEMVDSLYKAVITADKAYSEELGVNPSIKHTTVKPSGTVAKLAGVSEGMHFHYAGYLIQRIRFQASDPLLPALKECGYHTEPDIYTKNTICVEFPLRAAHADSKNFASAGTVSIEEQFATQAFLQTYWSDNAVSCTITFQSDENDEIAPLLRQYRHTIKSTSLLPYYGGSLKQAPKEPINKKTYEERAALITDDVEEVFTKQNDDQKGLELVGQTDCEGGACPIK</sequence>
<gene>
    <name type="primary">rtpR</name>
    <name type="ordered locus">LBA0041</name>
</gene>
<organism>
    <name type="scientific">Lactobacillus acidophilus (strain ATCC 700396 / NCK56 / N2 / NCFM)</name>
    <dbReference type="NCBI Taxonomy" id="272621"/>
    <lineage>
        <taxon>Bacteria</taxon>
        <taxon>Bacillati</taxon>
        <taxon>Bacillota</taxon>
        <taxon>Bacilli</taxon>
        <taxon>Lactobacillales</taxon>
        <taxon>Lactobacillaceae</taxon>
        <taxon>Lactobacillus</taxon>
    </lineage>
</organism>
<keyword id="KW-0021">Allosteric enzyme</keyword>
<keyword id="KW-0846">Cobalamin</keyword>
<keyword id="KW-0170">Cobalt</keyword>
<keyword id="KW-1015">Disulfide bond</keyword>
<keyword id="KW-0235">DNA replication</keyword>
<keyword id="KW-0560">Oxidoreductase</keyword>
<keyword id="KW-0676">Redox-active center</keyword>
<keyword id="KW-1185">Reference proteome</keyword>